<dbReference type="GO" id="GO:0005576">
    <property type="term" value="C:extracellular region"/>
    <property type="evidence" value="ECO:0007669"/>
    <property type="project" value="UniProtKB-SubCell"/>
</dbReference>
<dbReference type="GO" id="GO:0050832">
    <property type="term" value="P:defense response to fungus"/>
    <property type="evidence" value="ECO:0007669"/>
    <property type="project" value="UniProtKB-KW"/>
</dbReference>
<dbReference type="GO" id="GO:0050829">
    <property type="term" value="P:defense response to Gram-negative bacterium"/>
    <property type="evidence" value="ECO:0007669"/>
    <property type="project" value="UniProtKB-ARBA"/>
</dbReference>
<dbReference type="GO" id="GO:0050830">
    <property type="term" value="P:defense response to Gram-positive bacterium"/>
    <property type="evidence" value="ECO:0007669"/>
    <property type="project" value="UniProtKB-ARBA"/>
</dbReference>
<dbReference type="GO" id="GO:0031640">
    <property type="term" value="P:killing of cells of another organism"/>
    <property type="evidence" value="ECO:0007669"/>
    <property type="project" value="UniProtKB-KW"/>
</dbReference>
<dbReference type="InterPro" id="IPR032749">
    <property type="entry name" value="Nigrocin"/>
</dbReference>
<dbReference type="Pfam" id="PF16047">
    <property type="entry name" value="Antimicrobial22"/>
    <property type="match status" value="1"/>
</dbReference>
<organism>
    <name type="scientific">Pelophylax nigromaculatus</name>
    <name type="common">Black-spotted frog</name>
    <name type="synonym">Rana nigromaculata</name>
    <dbReference type="NCBI Taxonomy" id="8409"/>
    <lineage>
        <taxon>Eukaryota</taxon>
        <taxon>Metazoa</taxon>
        <taxon>Chordata</taxon>
        <taxon>Craniata</taxon>
        <taxon>Vertebrata</taxon>
        <taxon>Euteleostomi</taxon>
        <taxon>Amphibia</taxon>
        <taxon>Batrachia</taxon>
        <taxon>Anura</taxon>
        <taxon>Neobatrachia</taxon>
        <taxon>Ranoidea</taxon>
        <taxon>Ranidae</taxon>
        <taxon>Pelophylax</taxon>
    </lineage>
</organism>
<keyword id="KW-0878">Amphibian defense peptide</keyword>
<keyword id="KW-0044">Antibiotic</keyword>
<keyword id="KW-0929">Antimicrobial</keyword>
<keyword id="KW-0204">Cytolysis</keyword>
<keyword id="KW-0903">Direct protein sequencing</keyword>
<keyword id="KW-1015">Disulfide bond</keyword>
<keyword id="KW-0295">Fungicide</keyword>
<keyword id="KW-0964">Secreted</keyword>
<proteinExistence type="evidence at protein level"/>
<comment type="function">
    <text>Thanks to its single linear amphipathic alpha-helix, may integrate into membrane phospholipids, leading to lysis of the membrane. Shows antibacterial activity against both Gram-positive and Gram-negative bacteria and against the fungus C.albicans. Has no hemolytic activity.</text>
</comment>
<comment type="subcellular location">
    <subcellularLocation>
        <location>Secreted</location>
    </subcellularLocation>
</comment>
<comment type="tissue specificity">
    <text>Expressed by the skin dorsal glands.</text>
</comment>
<accession>P0C009</accession>
<reference key="1">
    <citation type="journal article" date="2001" name="FEBS Lett.">
        <title>Structural study of novel antimicrobial peptides, nigrocins, isolated from Rana nigromaculata.</title>
        <authorList>
            <person name="Park S."/>
            <person name="Park S.-H."/>
            <person name="Ahn H.-C."/>
            <person name="Kim S."/>
            <person name="Kim S.S."/>
            <person name="Lee B.J."/>
            <person name="Lee B.-J."/>
        </authorList>
    </citation>
    <scope>PROTEIN SEQUENCE</scope>
    <scope>CIRCULAR DICHROISM ANALYSIS</scope>
    <source>
        <tissue>Skin secretion</tissue>
    </source>
</reference>
<feature type="peptide" id="PRO_0000043814" description="Nigrocin-2">
    <location>
        <begin position="1"/>
        <end position="21"/>
    </location>
</feature>
<feature type="disulfide bond" evidence="1">
    <location>
        <begin position="15"/>
        <end position="21"/>
    </location>
</feature>
<sequence length="21" mass="2031">GLLSKVLGVGKKVLCGVSGLC</sequence>
<evidence type="ECO:0000250" key="1"/>
<protein>
    <recommendedName>
        <fullName>Nigrocin-2</fullName>
    </recommendedName>
</protein>
<name>NIGR2_PELNI</name>